<geneLocation type="chloroplast"/>
<comment type="function">
    <text evidence="1">One of the components of the core complex of photosystem II (PSII). It binds chlorophyll and helps catalyze the primary light-induced photochemical processes of PSII. PSII is a light-driven water:plastoquinone oxidoreductase, using light energy to abstract electrons from H(2)O, generating O(2) and a proton gradient subsequently used for ATP formation.</text>
</comment>
<comment type="cofactor">
    <text evidence="1">Binds multiple chlorophylls. PSII binds additional chlorophylls, carotenoids and specific lipids.</text>
</comment>
<comment type="subunit">
    <text evidence="1">PSII is composed of 1 copy each of membrane proteins PsbA, PsbB, PsbC, PsbD, PsbE, PsbF, PsbH, PsbI, PsbJ, PsbK, PsbL, PsbM, PsbT, PsbX, PsbY, PsbZ, Psb30/Ycf12, at least 3 peripheral proteins of the oxygen-evolving complex and a large number of cofactors. It forms dimeric complexes.</text>
</comment>
<comment type="subcellular location">
    <subcellularLocation>
        <location evidence="1">Plastid</location>
        <location evidence="1">Chloroplast thylakoid membrane</location>
        <topology evidence="1">Multi-pass membrane protein</topology>
    </subcellularLocation>
</comment>
<comment type="similarity">
    <text evidence="1">Belongs to the PsbB/PsbC family. PsbB subfamily.</text>
</comment>
<accession>B2XWP9</accession>
<evidence type="ECO:0000255" key="1">
    <source>
        <dbReference type="HAMAP-Rule" id="MF_01495"/>
    </source>
</evidence>
<sequence>MGLPWYRVHTVVLNDPGRLISVHIMHTALVAGWAGSMALYELAVFDPSDPVLDPMWRQGMFVIPFMTRLGITNSWGGWSITGGTVTDPGIWSYEGVAGSHIVFSGLCFLAAIWHWVYWDLEIFCDERTGKPSLDLPKIFGIHLFLSGVACFGFGAFHVTGLYGPGIWVSDPYGLTGKVQSVNPAWGVEGFDPFVPGGIASHHIAAGTLGILAGLFHLSVRPPQRLYKGLRMGNIETVLSSSIAAVFFAAFVVAGTMWYGSATTPIELFGPTRYQWDQGYFQQEIYRRVSAGLAENQSLSEAWSKIPEKLAFYDYIGNNPAKGGLFRAGSMDNGDGIAVGWLGHPIFRDKEGRELFVRRMPTFFETFPVVLIDGDGIVRADVPFRRAESKYSVEQVGVTVEFYGGELNGVSYSDPATVKKYARRAQLGEIFELDRATLKSDGVFRSSPRGWFTFGHASFALLFFFGHIWHGSRTLFRDVFAGIDPDLDSQVEFGAFQKLGDPTTRRQAV</sequence>
<name>PSBB_FAGEA</name>
<protein>
    <recommendedName>
        <fullName evidence="1">Photosystem II CP47 reaction center protein</fullName>
    </recommendedName>
    <alternativeName>
        <fullName evidence="1">PSII 47 kDa protein</fullName>
    </alternativeName>
    <alternativeName>
        <fullName evidence="1">Protein CP-47</fullName>
    </alternativeName>
</protein>
<gene>
    <name evidence="1" type="primary">psbB</name>
</gene>
<proteinExistence type="inferred from homology"/>
<organism>
    <name type="scientific">Fagopyrum esculentum subsp. ancestrale</name>
    <name type="common">Wild buckwheat</name>
    <dbReference type="NCBI Taxonomy" id="180217"/>
    <lineage>
        <taxon>Eukaryota</taxon>
        <taxon>Viridiplantae</taxon>
        <taxon>Streptophyta</taxon>
        <taxon>Embryophyta</taxon>
        <taxon>Tracheophyta</taxon>
        <taxon>Spermatophyta</taxon>
        <taxon>Magnoliopsida</taxon>
        <taxon>eudicotyledons</taxon>
        <taxon>Gunneridae</taxon>
        <taxon>Pentapetalae</taxon>
        <taxon>Caryophyllales</taxon>
        <taxon>Polygonaceae</taxon>
        <taxon>Polygonoideae</taxon>
        <taxon>Fagopyreae</taxon>
        <taxon>Fagopyrum</taxon>
    </lineage>
</organism>
<keyword id="KW-0148">Chlorophyll</keyword>
<keyword id="KW-0150">Chloroplast</keyword>
<keyword id="KW-0157">Chromophore</keyword>
<keyword id="KW-0472">Membrane</keyword>
<keyword id="KW-0602">Photosynthesis</keyword>
<keyword id="KW-0604">Photosystem II</keyword>
<keyword id="KW-0934">Plastid</keyword>
<keyword id="KW-0793">Thylakoid</keyword>
<keyword id="KW-0812">Transmembrane</keyword>
<keyword id="KW-1133">Transmembrane helix</keyword>
<feature type="chain" id="PRO_0000359823" description="Photosystem II CP47 reaction center protein">
    <location>
        <begin position="1"/>
        <end position="508"/>
    </location>
</feature>
<feature type="transmembrane region" description="Helical" evidence="1">
    <location>
        <begin position="21"/>
        <end position="36"/>
    </location>
</feature>
<feature type="transmembrane region" description="Helical" evidence="1">
    <location>
        <begin position="101"/>
        <end position="115"/>
    </location>
</feature>
<feature type="transmembrane region" description="Helical" evidence="1">
    <location>
        <begin position="140"/>
        <end position="156"/>
    </location>
</feature>
<feature type="transmembrane region" description="Helical" evidence="1">
    <location>
        <begin position="203"/>
        <end position="218"/>
    </location>
</feature>
<feature type="transmembrane region" description="Helical" evidence="1">
    <location>
        <begin position="237"/>
        <end position="252"/>
    </location>
</feature>
<feature type="transmembrane region" description="Helical" evidence="1">
    <location>
        <begin position="457"/>
        <end position="472"/>
    </location>
</feature>
<reference key="1">
    <citation type="journal article" date="2008" name="BMC Plant Biol.">
        <title>Comparative chloroplast genomics and phylogenetics of Fagopyrum esculentum ssp. ancestrale - a wild ancestor of cultivated buckwheat.</title>
        <authorList>
            <person name="Logacheva M.D."/>
            <person name="Samigullin T.H."/>
            <person name="Dhingra A."/>
            <person name="Penin A.A."/>
        </authorList>
    </citation>
    <scope>NUCLEOTIDE SEQUENCE [LARGE SCALE GENOMIC DNA]</scope>
</reference>
<dbReference type="EMBL" id="EU254477">
    <property type="protein sequence ID" value="ABY79758.1"/>
    <property type="molecule type" value="Genomic_DNA"/>
</dbReference>
<dbReference type="RefSeq" id="YP_001936543.1">
    <property type="nucleotide sequence ID" value="NC_010776.1"/>
</dbReference>
<dbReference type="SMR" id="B2XWP9"/>
<dbReference type="GeneID" id="6336043"/>
<dbReference type="GO" id="GO:0009535">
    <property type="term" value="C:chloroplast thylakoid membrane"/>
    <property type="evidence" value="ECO:0007669"/>
    <property type="project" value="UniProtKB-SubCell"/>
</dbReference>
<dbReference type="GO" id="GO:0009523">
    <property type="term" value="C:photosystem II"/>
    <property type="evidence" value="ECO:0007669"/>
    <property type="project" value="UniProtKB-KW"/>
</dbReference>
<dbReference type="GO" id="GO:0016168">
    <property type="term" value="F:chlorophyll binding"/>
    <property type="evidence" value="ECO:0007669"/>
    <property type="project" value="UniProtKB-UniRule"/>
</dbReference>
<dbReference type="GO" id="GO:0045156">
    <property type="term" value="F:electron transporter, transferring electrons within the cyclic electron transport pathway of photosynthesis activity"/>
    <property type="evidence" value="ECO:0007669"/>
    <property type="project" value="InterPro"/>
</dbReference>
<dbReference type="GO" id="GO:0009772">
    <property type="term" value="P:photosynthetic electron transport in photosystem II"/>
    <property type="evidence" value="ECO:0007669"/>
    <property type="project" value="InterPro"/>
</dbReference>
<dbReference type="FunFam" id="3.10.680.10:FF:000001">
    <property type="entry name" value="Photosystem II CP47 reaction center protein"/>
    <property type="match status" value="1"/>
</dbReference>
<dbReference type="Gene3D" id="3.10.680.10">
    <property type="entry name" value="Photosystem II CP47 reaction center protein"/>
    <property type="match status" value="1"/>
</dbReference>
<dbReference type="HAMAP" id="MF_01495">
    <property type="entry name" value="PSII_PsbB_CP47"/>
    <property type="match status" value="1"/>
</dbReference>
<dbReference type="InterPro" id="IPR000932">
    <property type="entry name" value="PS_antenna-like"/>
</dbReference>
<dbReference type="InterPro" id="IPR036001">
    <property type="entry name" value="PS_II_antenna-like_sf"/>
</dbReference>
<dbReference type="InterPro" id="IPR017486">
    <property type="entry name" value="PSII_PsbB"/>
</dbReference>
<dbReference type="NCBIfam" id="TIGR03039">
    <property type="entry name" value="PS_II_CP47"/>
    <property type="match status" value="1"/>
</dbReference>
<dbReference type="PANTHER" id="PTHR33180">
    <property type="entry name" value="PHOTOSYSTEM II CP43 REACTION CENTER PROTEIN"/>
    <property type="match status" value="1"/>
</dbReference>
<dbReference type="PANTHER" id="PTHR33180:SF38">
    <property type="entry name" value="PHOTOSYSTEM II CP47 REACTION CENTER PROTEIN"/>
    <property type="match status" value="1"/>
</dbReference>
<dbReference type="Pfam" id="PF00421">
    <property type="entry name" value="PSII"/>
    <property type="match status" value="1"/>
</dbReference>
<dbReference type="SUPFAM" id="SSF161077">
    <property type="entry name" value="Photosystem II antenna protein-like"/>
    <property type="match status" value="1"/>
</dbReference>